<reference key="1">
    <citation type="journal article" date="2010" name="BMC Genomics">
        <title>A genomic perspective on the potential of Actinobacillus succinogenes for industrial succinate production.</title>
        <authorList>
            <person name="McKinlay J.B."/>
            <person name="Laivenieks M."/>
            <person name="Schindler B.D."/>
            <person name="McKinlay A.A."/>
            <person name="Siddaramappa S."/>
            <person name="Challacombe J.F."/>
            <person name="Lowry S.R."/>
            <person name="Clum A."/>
            <person name="Lapidus A.L."/>
            <person name="Burkhart K.B."/>
            <person name="Harkins V."/>
            <person name="Vieille C."/>
        </authorList>
    </citation>
    <scope>NUCLEOTIDE SEQUENCE [LARGE SCALE GENOMIC DNA]</scope>
    <source>
        <strain>ATCC 55618 / DSM 22257 / CCUG 43843 / 130Z</strain>
    </source>
</reference>
<proteinExistence type="inferred from homology"/>
<keyword id="KW-0963">Cytoplasm</keyword>
<keyword id="KW-0342">GTP-binding</keyword>
<keyword id="KW-0547">Nucleotide-binding</keyword>
<keyword id="KW-0648">Protein biosynthesis</keyword>
<keyword id="KW-1185">Reference proteome</keyword>
<evidence type="ECO:0000255" key="1">
    <source>
        <dbReference type="HAMAP-Rule" id="MF_00072"/>
    </source>
</evidence>
<protein>
    <recommendedName>
        <fullName evidence="1">Peptide chain release factor 3</fullName>
        <shortName evidence="1">RF-3</shortName>
    </recommendedName>
</protein>
<gene>
    <name evidence="1" type="primary">prfC</name>
    <name type="ordered locus">Asuc_0982</name>
</gene>
<comment type="function">
    <text evidence="1">Increases the formation of ribosomal termination complexes and stimulates activities of RF-1 and RF-2. It binds guanine nucleotides and has strong preference for UGA stop codons. It may interact directly with the ribosome. The stimulation of RF-1 and RF-2 is significantly reduced by GTP and GDP, but not by GMP.</text>
</comment>
<comment type="subcellular location">
    <subcellularLocation>
        <location evidence="1">Cytoplasm</location>
    </subcellularLocation>
</comment>
<comment type="similarity">
    <text evidence="1">Belongs to the TRAFAC class translation factor GTPase superfamily. Classic translation factor GTPase family. PrfC subfamily.</text>
</comment>
<accession>A6VN03</accession>
<sequence>MSYPQEVDKRRTFAIISHPDAGKTTITEKVLLYGNAIQTAGSVKGKGSQAHAKSDWMEMEKQRGISITTSVMQFPYNDCLVNLLDTPGHEDFSEDTYRTLTAVDSCLMVIDAAKGVEDRTIKLMEVTRLRDTPILTFMNKLDRDIRDPMELLDEVESVLKIHCAPITWPIGCGKLFKGVYHLYKDETYLYQSGQGSTIQEVRIIKGLDNPQLDAAVGADLAQQLREELELVQGASNEFDQELFIGGELTPVFFGTALGNFGVNHFLDGLTQWAPKPQARKADTRIVESAEEKFTGFVFKIQANMDPKHRDRVAFMRVVSGKYEKGMKLKHVRIGKDVVISDALTFMAGDRTHAEQAYAGDIIGLHNHGTIQIGDTFTQGEDLKFTGIPNFAPELFRRIRLRDPLKQKQLLKGLVQLSEEGAVQVFRPLANNDLIVGAVGVLQFDVVVARLKTEYNVEAVYENVNVATARWVECADEKKFEEFKRKNEQNLALDGGDNLTYIAPTMVNLNLSQERYPDVTFFKTREH</sequence>
<feature type="chain" id="PRO_1000075157" description="Peptide chain release factor 3">
    <location>
        <begin position="1"/>
        <end position="526"/>
    </location>
</feature>
<feature type="domain" description="tr-type G">
    <location>
        <begin position="8"/>
        <end position="277"/>
    </location>
</feature>
<feature type="binding site" evidence="1">
    <location>
        <begin position="17"/>
        <end position="24"/>
    </location>
    <ligand>
        <name>GTP</name>
        <dbReference type="ChEBI" id="CHEBI:37565"/>
    </ligand>
</feature>
<feature type="binding site" evidence="1">
    <location>
        <begin position="85"/>
        <end position="89"/>
    </location>
    <ligand>
        <name>GTP</name>
        <dbReference type="ChEBI" id="CHEBI:37565"/>
    </ligand>
</feature>
<feature type="binding site" evidence="1">
    <location>
        <begin position="139"/>
        <end position="142"/>
    </location>
    <ligand>
        <name>GTP</name>
        <dbReference type="ChEBI" id="CHEBI:37565"/>
    </ligand>
</feature>
<organism>
    <name type="scientific">Actinobacillus succinogenes (strain ATCC 55618 / DSM 22257 / CCUG 43843 / 130Z)</name>
    <dbReference type="NCBI Taxonomy" id="339671"/>
    <lineage>
        <taxon>Bacteria</taxon>
        <taxon>Pseudomonadati</taxon>
        <taxon>Pseudomonadota</taxon>
        <taxon>Gammaproteobacteria</taxon>
        <taxon>Pasteurellales</taxon>
        <taxon>Pasteurellaceae</taxon>
        <taxon>Actinobacillus</taxon>
    </lineage>
</organism>
<dbReference type="EMBL" id="CP000746">
    <property type="protein sequence ID" value="ABR74350.1"/>
    <property type="molecule type" value="Genomic_DNA"/>
</dbReference>
<dbReference type="RefSeq" id="WP_012072727.1">
    <property type="nucleotide sequence ID" value="NC_009655.1"/>
</dbReference>
<dbReference type="SMR" id="A6VN03"/>
<dbReference type="STRING" id="339671.Asuc_0982"/>
<dbReference type="KEGG" id="asu:Asuc_0982"/>
<dbReference type="eggNOG" id="COG4108">
    <property type="taxonomic scope" value="Bacteria"/>
</dbReference>
<dbReference type="HOGENOM" id="CLU_002794_2_1_6"/>
<dbReference type="OrthoDB" id="9801472at2"/>
<dbReference type="Proteomes" id="UP000001114">
    <property type="component" value="Chromosome"/>
</dbReference>
<dbReference type="GO" id="GO:0005829">
    <property type="term" value="C:cytosol"/>
    <property type="evidence" value="ECO:0007669"/>
    <property type="project" value="TreeGrafter"/>
</dbReference>
<dbReference type="GO" id="GO:0005525">
    <property type="term" value="F:GTP binding"/>
    <property type="evidence" value="ECO:0007669"/>
    <property type="project" value="UniProtKB-UniRule"/>
</dbReference>
<dbReference type="GO" id="GO:0003924">
    <property type="term" value="F:GTPase activity"/>
    <property type="evidence" value="ECO:0007669"/>
    <property type="project" value="InterPro"/>
</dbReference>
<dbReference type="GO" id="GO:0097216">
    <property type="term" value="F:guanosine tetraphosphate binding"/>
    <property type="evidence" value="ECO:0007669"/>
    <property type="project" value="UniProtKB-ARBA"/>
</dbReference>
<dbReference type="GO" id="GO:0016150">
    <property type="term" value="F:translation release factor activity, codon nonspecific"/>
    <property type="evidence" value="ECO:0007669"/>
    <property type="project" value="TreeGrafter"/>
</dbReference>
<dbReference type="GO" id="GO:0016149">
    <property type="term" value="F:translation release factor activity, codon specific"/>
    <property type="evidence" value="ECO:0007669"/>
    <property type="project" value="UniProtKB-UniRule"/>
</dbReference>
<dbReference type="GO" id="GO:0006449">
    <property type="term" value="P:regulation of translational termination"/>
    <property type="evidence" value="ECO:0007669"/>
    <property type="project" value="UniProtKB-UniRule"/>
</dbReference>
<dbReference type="CDD" id="cd04169">
    <property type="entry name" value="RF3"/>
    <property type="match status" value="1"/>
</dbReference>
<dbReference type="CDD" id="cd03689">
    <property type="entry name" value="RF3_II"/>
    <property type="match status" value="1"/>
</dbReference>
<dbReference type="CDD" id="cd16259">
    <property type="entry name" value="RF3_III"/>
    <property type="match status" value="1"/>
</dbReference>
<dbReference type="FunFam" id="2.40.30.10:FF:000040">
    <property type="entry name" value="Peptide chain release factor 3"/>
    <property type="match status" value="1"/>
</dbReference>
<dbReference type="FunFam" id="3.30.70.3280:FF:000001">
    <property type="entry name" value="Peptide chain release factor 3"/>
    <property type="match status" value="1"/>
</dbReference>
<dbReference type="FunFam" id="3.40.50.300:FF:000542">
    <property type="entry name" value="Peptide chain release factor 3"/>
    <property type="match status" value="1"/>
</dbReference>
<dbReference type="Gene3D" id="3.40.50.300">
    <property type="entry name" value="P-loop containing nucleotide triphosphate hydrolases"/>
    <property type="match status" value="2"/>
</dbReference>
<dbReference type="Gene3D" id="3.30.70.3280">
    <property type="entry name" value="Peptide chain release factor 3, domain III"/>
    <property type="match status" value="1"/>
</dbReference>
<dbReference type="HAMAP" id="MF_00072">
    <property type="entry name" value="Rel_fac_3"/>
    <property type="match status" value="1"/>
</dbReference>
<dbReference type="InterPro" id="IPR053905">
    <property type="entry name" value="EF-G-like_DII"/>
</dbReference>
<dbReference type="InterPro" id="IPR035647">
    <property type="entry name" value="EFG_III/V"/>
</dbReference>
<dbReference type="InterPro" id="IPR031157">
    <property type="entry name" value="G_TR_CS"/>
</dbReference>
<dbReference type="InterPro" id="IPR027417">
    <property type="entry name" value="P-loop_NTPase"/>
</dbReference>
<dbReference type="InterPro" id="IPR004548">
    <property type="entry name" value="PrfC"/>
</dbReference>
<dbReference type="InterPro" id="IPR032090">
    <property type="entry name" value="RF3_C"/>
</dbReference>
<dbReference type="InterPro" id="IPR038467">
    <property type="entry name" value="RF3_dom_3_sf"/>
</dbReference>
<dbReference type="InterPro" id="IPR041732">
    <property type="entry name" value="RF3_GTP-bd"/>
</dbReference>
<dbReference type="InterPro" id="IPR005225">
    <property type="entry name" value="Small_GTP-bd"/>
</dbReference>
<dbReference type="InterPro" id="IPR000795">
    <property type="entry name" value="T_Tr_GTP-bd_dom"/>
</dbReference>
<dbReference type="InterPro" id="IPR009000">
    <property type="entry name" value="Transl_B-barrel_sf"/>
</dbReference>
<dbReference type="NCBIfam" id="TIGR00503">
    <property type="entry name" value="prfC"/>
    <property type="match status" value="1"/>
</dbReference>
<dbReference type="NCBIfam" id="NF001964">
    <property type="entry name" value="PRK00741.1"/>
    <property type="match status" value="1"/>
</dbReference>
<dbReference type="NCBIfam" id="TIGR00231">
    <property type="entry name" value="small_GTP"/>
    <property type="match status" value="1"/>
</dbReference>
<dbReference type="PANTHER" id="PTHR43556">
    <property type="entry name" value="PEPTIDE CHAIN RELEASE FACTOR RF3"/>
    <property type="match status" value="1"/>
</dbReference>
<dbReference type="PANTHER" id="PTHR43556:SF2">
    <property type="entry name" value="PEPTIDE CHAIN RELEASE FACTOR RF3"/>
    <property type="match status" value="1"/>
</dbReference>
<dbReference type="Pfam" id="PF22042">
    <property type="entry name" value="EF-G_D2"/>
    <property type="match status" value="1"/>
</dbReference>
<dbReference type="Pfam" id="PF00009">
    <property type="entry name" value="GTP_EFTU"/>
    <property type="match status" value="1"/>
</dbReference>
<dbReference type="Pfam" id="PF16658">
    <property type="entry name" value="RF3_C"/>
    <property type="match status" value="1"/>
</dbReference>
<dbReference type="PRINTS" id="PR00315">
    <property type="entry name" value="ELONGATNFCT"/>
</dbReference>
<dbReference type="SUPFAM" id="SSF54980">
    <property type="entry name" value="EF-G C-terminal domain-like"/>
    <property type="match status" value="1"/>
</dbReference>
<dbReference type="SUPFAM" id="SSF52540">
    <property type="entry name" value="P-loop containing nucleoside triphosphate hydrolases"/>
    <property type="match status" value="1"/>
</dbReference>
<dbReference type="SUPFAM" id="SSF50447">
    <property type="entry name" value="Translation proteins"/>
    <property type="match status" value="1"/>
</dbReference>
<dbReference type="PROSITE" id="PS00301">
    <property type="entry name" value="G_TR_1"/>
    <property type="match status" value="1"/>
</dbReference>
<dbReference type="PROSITE" id="PS51722">
    <property type="entry name" value="G_TR_2"/>
    <property type="match status" value="1"/>
</dbReference>
<name>RF3_ACTSZ</name>